<sequence length="270" mass="30191">MISKINFVKMHGLGNDFVIVNKRDLLSSYDLSQLAKNMADRHTGIGCDQFIIYEEHNDFYEMIIYNIDGSSAKLCGNATRCLAKLIYLDTGKKDITVMVCNKKLLCNVEDENNISVNVGSVSFNEAWMPSRDKIWELAERYMIDLKETICVDIGNPHLVIFSKLEPQDQKIVGEKLQAKELFADGVNVNFAEVKDNKIYLSVWERGVGFTLACGSGACGSFAAGLKLGFIHAPSMVVFKHGILTMKEENGNIIMQGSAKLVAQGEYYYEQ</sequence>
<gene>
    <name evidence="1" type="primary">dapF</name>
    <name type="ordered locus">A1C_03130</name>
</gene>
<feature type="chain" id="PRO_1000011952" description="Diaminopimelate epimerase">
    <location>
        <begin position="1"/>
        <end position="270"/>
    </location>
</feature>
<feature type="active site" description="Proton donor" evidence="1">
    <location>
        <position position="75"/>
    </location>
</feature>
<feature type="active site" description="Proton acceptor" evidence="1">
    <location>
        <position position="213"/>
    </location>
</feature>
<feature type="binding site" evidence="1">
    <location>
        <position position="15"/>
    </location>
    <ligand>
        <name>substrate</name>
    </ligand>
</feature>
<feature type="binding site" evidence="1">
    <location>
        <position position="49"/>
    </location>
    <ligand>
        <name>substrate</name>
    </ligand>
</feature>
<feature type="binding site" evidence="1">
    <location>
        <position position="66"/>
    </location>
    <ligand>
        <name>substrate</name>
    </ligand>
</feature>
<feature type="binding site" evidence="1">
    <location>
        <begin position="76"/>
        <end position="77"/>
    </location>
    <ligand>
        <name>substrate</name>
    </ligand>
</feature>
<feature type="binding site" evidence="1">
    <location>
        <position position="155"/>
    </location>
    <ligand>
        <name>substrate</name>
    </ligand>
</feature>
<feature type="binding site" evidence="1">
    <location>
        <position position="187"/>
    </location>
    <ligand>
        <name>substrate</name>
    </ligand>
</feature>
<feature type="binding site" evidence="1">
    <location>
        <begin position="204"/>
        <end position="205"/>
    </location>
    <ligand>
        <name>substrate</name>
    </ligand>
</feature>
<feature type="binding site" evidence="1">
    <location>
        <begin position="214"/>
        <end position="215"/>
    </location>
    <ligand>
        <name>substrate</name>
    </ligand>
</feature>
<feature type="site" description="Could be important to modulate the pK values of the two catalytic cysteine residues" evidence="1">
    <location>
        <position position="157"/>
    </location>
</feature>
<feature type="site" description="Could be important to modulate the pK values of the two catalytic cysteine residues" evidence="1">
    <location>
        <position position="204"/>
    </location>
</feature>
<comment type="function">
    <text evidence="1">Catalyzes the stereoinversion of LL-2,6-diaminopimelate (L,L-DAP) to meso-diaminopimelate (meso-DAP), a precursor of L-lysine and an essential component of the bacterial peptidoglycan.</text>
</comment>
<comment type="catalytic activity">
    <reaction evidence="1">
        <text>(2S,6S)-2,6-diaminopimelate = meso-2,6-diaminopimelate</text>
        <dbReference type="Rhea" id="RHEA:15393"/>
        <dbReference type="ChEBI" id="CHEBI:57609"/>
        <dbReference type="ChEBI" id="CHEBI:57791"/>
        <dbReference type="EC" id="5.1.1.7"/>
    </reaction>
</comment>
<comment type="pathway">
    <text evidence="1">Amino-acid biosynthesis; L-lysine biosynthesis via DAP pathway; DL-2,6-diaminopimelate from LL-2,6-diaminopimelate: step 1/1.</text>
</comment>
<comment type="subunit">
    <text evidence="1">Homodimer.</text>
</comment>
<comment type="subcellular location">
    <subcellularLocation>
        <location evidence="1">Cytoplasm</location>
    </subcellularLocation>
</comment>
<comment type="similarity">
    <text evidence="1">Belongs to the diaminopimelate epimerase family.</text>
</comment>
<protein>
    <recommendedName>
        <fullName evidence="1">Diaminopimelate epimerase</fullName>
        <shortName evidence="1">DAP epimerase</shortName>
        <ecNumber evidence="1">5.1.1.7</ecNumber>
    </recommendedName>
    <alternativeName>
        <fullName evidence="1">PLP-independent amino acid racemase</fullName>
    </alternativeName>
</protein>
<name>DAPF_RICAH</name>
<proteinExistence type="inferred from homology"/>
<keyword id="KW-0028">Amino-acid biosynthesis</keyword>
<keyword id="KW-0963">Cytoplasm</keyword>
<keyword id="KW-0413">Isomerase</keyword>
<keyword id="KW-0457">Lysine biosynthesis</keyword>
<dbReference type="EC" id="5.1.1.7" evidence="1"/>
<dbReference type="EMBL" id="CP000847">
    <property type="protein sequence ID" value="ABV74912.1"/>
    <property type="molecule type" value="Genomic_DNA"/>
</dbReference>
<dbReference type="RefSeq" id="WP_012149545.1">
    <property type="nucleotide sequence ID" value="NC_009881.1"/>
</dbReference>
<dbReference type="SMR" id="A8GND7"/>
<dbReference type="STRING" id="293614.A1C_03130"/>
<dbReference type="KEGG" id="rak:A1C_03130"/>
<dbReference type="eggNOG" id="COG0253">
    <property type="taxonomic scope" value="Bacteria"/>
</dbReference>
<dbReference type="HOGENOM" id="CLU_053306_1_0_5"/>
<dbReference type="UniPathway" id="UPA00034">
    <property type="reaction ID" value="UER00025"/>
</dbReference>
<dbReference type="Proteomes" id="UP000006830">
    <property type="component" value="Chromosome"/>
</dbReference>
<dbReference type="GO" id="GO:0005829">
    <property type="term" value="C:cytosol"/>
    <property type="evidence" value="ECO:0007669"/>
    <property type="project" value="TreeGrafter"/>
</dbReference>
<dbReference type="GO" id="GO:0008837">
    <property type="term" value="F:diaminopimelate epimerase activity"/>
    <property type="evidence" value="ECO:0007669"/>
    <property type="project" value="UniProtKB-UniRule"/>
</dbReference>
<dbReference type="GO" id="GO:0009089">
    <property type="term" value="P:lysine biosynthetic process via diaminopimelate"/>
    <property type="evidence" value="ECO:0007669"/>
    <property type="project" value="UniProtKB-UniRule"/>
</dbReference>
<dbReference type="Gene3D" id="3.10.310.10">
    <property type="entry name" value="Diaminopimelate Epimerase, Chain A, domain 1"/>
    <property type="match status" value="2"/>
</dbReference>
<dbReference type="HAMAP" id="MF_00197">
    <property type="entry name" value="DAP_epimerase"/>
    <property type="match status" value="1"/>
</dbReference>
<dbReference type="InterPro" id="IPR018510">
    <property type="entry name" value="DAP_epimerase_AS"/>
</dbReference>
<dbReference type="InterPro" id="IPR001653">
    <property type="entry name" value="DAP_epimerase_DapF"/>
</dbReference>
<dbReference type="NCBIfam" id="TIGR00652">
    <property type="entry name" value="DapF"/>
    <property type="match status" value="1"/>
</dbReference>
<dbReference type="PANTHER" id="PTHR31689:SF0">
    <property type="entry name" value="DIAMINOPIMELATE EPIMERASE"/>
    <property type="match status" value="1"/>
</dbReference>
<dbReference type="PANTHER" id="PTHR31689">
    <property type="entry name" value="DIAMINOPIMELATE EPIMERASE, CHLOROPLASTIC"/>
    <property type="match status" value="1"/>
</dbReference>
<dbReference type="Pfam" id="PF01678">
    <property type="entry name" value="DAP_epimerase"/>
    <property type="match status" value="2"/>
</dbReference>
<dbReference type="SUPFAM" id="SSF54506">
    <property type="entry name" value="Diaminopimelate epimerase-like"/>
    <property type="match status" value="2"/>
</dbReference>
<dbReference type="PROSITE" id="PS01326">
    <property type="entry name" value="DAP_EPIMERASE"/>
    <property type="match status" value="1"/>
</dbReference>
<evidence type="ECO:0000255" key="1">
    <source>
        <dbReference type="HAMAP-Rule" id="MF_00197"/>
    </source>
</evidence>
<organism>
    <name type="scientific">Rickettsia akari (strain Hartford)</name>
    <dbReference type="NCBI Taxonomy" id="293614"/>
    <lineage>
        <taxon>Bacteria</taxon>
        <taxon>Pseudomonadati</taxon>
        <taxon>Pseudomonadota</taxon>
        <taxon>Alphaproteobacteria</taxon>
        <taxon>Rickettsiales</taxon>
        <taxon>Rickettsiaceae</taxon>
        <taxon>Rickettsieae</taxon>
        <taxon>Rickettsia</taxon>
        <taxon>spotted fever group</taxon>
    </lineage>
</organism>
<accession>A8GND7</accession>
<reference key="1">
    <citation type="submission" date="2007-09" db="EMBL/GenBank/DDBJ databases">
        <title>Complete genome sequence of Rickettsia akari.</title>
        <authorList>
            <person name="Madan A."/>
            <person name="Fahey J."/>
            <person name="Helton E."/>
            <person name="Ketteman M."/>
            <person name="Madan A."/>
            <person name="Rodrigues S."/>
            <person name="Sanchez A."/>
            <person name="Whiting M."/>
            <person name="Dasch G."/>
            <person name="Eremeeva M."/>
        </authorList>
    </citation>
    <scope>NUCLEOTIDE SEQUENCE [LARGE SCALE GENOMIC DNA]</scope>
    <source>
        <strain>Hartford</strain>
    </source>
</reference>